<reference key="1">
    <citation type="journal article" date="2004" name="Science">
        <title>The genomic sequence of the accidental pathogen Legionella pneumophila.</title>
        <authorList>
            <person name="Chien M."/>
            <person name="Morozova I."/>
            <person name="Shi S."/>
            <person name="Sheng H."/>
            <person name="Chen J."/>
            <person name="Gomez S.M."/>
            <person name="Asamani G."/>
            <person name="Hill K."/>
            <person name="Nuara J."/>
            <person name="Feder M."/>
            <person name="Rineer J."/>
            <person name="Greenberg J.J."/>
            <person name="Steshenko V."/>
            <person name="Park S.H."/>
            <person name="Zhao B."/>
            <person name="Teplitskaya E."/>
            <person name="Edwards J.R."/>
            <person name="Pampou S."/>
            <person name="Georghiou A."/>
            <person name="Chou I.-C."/>
            <person name="Iannuccilli W."/>
            <person name="Ulz M.E."/>
            <person name="Kim D.H."/>
            <person name="Geringer-Sameth A."/>
            <person name="Goldsberry C."/>
            <person name="Morozov P."/>
            <person name="Fischer S.G."/>
            <person name="Segal G."/>
            <person name="Qu X."/>
            <person name="Rzhetsky A."/>
            <person name="Zhang P."/>
            <person name="Cayanis E."/>
            <person name="De Jong P.J."/>
            <person name="Ju J."/>
            <person name="Kalachikov S."/>
            <person name="Shuman H.A."/>
            <person name="Russo J.J."/>
        </authorList>
    </citation>
    <scope>NUCLEOTIDE SEQUENCE [LARGE SCALE GENOMIC DNA]</scope>
    <source>
        <strain>Philadelphia 1 / ATCC 33152 / DSM 7513</strain>
    </source>
</reference>
<sequence>MNTNIANQLRAAKKATTDLNLIQSDTRTIILKTLAANLEKHIENIIQENQKDLSLMLEQDPRYDRLLLNKERILSLVNDVRKVANLPNPLGVNLFEKSMPNGLSIKKITVPLGVIAVIYESRPNVTIDIFSLCFKSGNVCILKGGKEAHFTNSYLLLLIKNTLKNFNINTDIVCLLPPERALMTQLLNATGLVDLCIPRGSQNLINFVRDNAKIPVIETGAGIVHTYFDKSGDLGKGKKIINNAKTRRVSVCNALDTLIIHADRLKDLPELVETLSQKNVIIYADQDAYHVLDKNYPEQLLIKAKPQDFGHEFLDYKLAIKTVPNIKAAIDHIQQFSSHHSEAVIAEDESAIDKFLTEVDAAAVYANASTAFTDGGEFGLGAEIGISTQKVHARGPMGLEALTSYKWVIRGTGQIRD</sequence>
<dbReference type="EC" id="1.2.1.41" evidence="1"/>
<dbReference type="EMBL" id="AE017354">
    <property type="protein sequence ID" value="AAU27689.1"/>
    <property type="molecule type" value="Genomic_DNA"/>
</dbReference>
<dbReference type="RefSeq" id="WP_010947336.1">
    <property type="nucleotide sequence ID" value="NC_002942.5"/>
</dbReference>
<dbReference type="RefSeq" id="YP_095636.1">
    <property type="nucleotide sequence ID" value="NC_002942.5"/>
</dbReference>
<dbReference type="SMR" id="Q5ZV33"/>
<dbReference type="STRING" id="272624.lpg1609"/>
<dbReference type="PaxDb" id="272624-lpg1609"/>
<dbReference type="KEGG" id="lpn:lpg1609"/>
<dbReference type="PATRIC" id="fig|272624.6.peg.1683"/>
<dbReference type="eggNOG" id="COG0014">
    <property type="taxonomic scope" value="Bacteria"/>
</dbReference>
<dbReference type="HOGENOM" id="CLU_030231_0_0_6"/>
<dbReference type="OrthoDB" id="9809970at2"/>
<dbReference type="UniPathway" id="UPA00098">
    <property type="reaction ID" value="UER00360"/>
</dbReference>
<dbReference type="Proteomes" id="UP000000609">
    <property type="component" value="Chromosome"/>
</dbReference>
<dbReference type="GO" id="GO:0005737">
    <property type="term" value="C:cytoplasm"/>
    <property type="evidence" value="ECO:0007669"/>
    <property type="project" value="UniProtKB-SubCell"/>
</dbReference>
<dbReference type="GO" id="GO:0004350">
    <property type="term" value="F:glutamate-5-semialdehyde dehydrogenase activity"/>
    <property type="evidence" value="ECO:0007669"/>
    <property type="project" value="UniProtKB-UniRule"/>
</dbReference>
<dbReference type="GO" id="GO:0050661">
    <property type="term" value="F:NADP binding"/>
    <property type="evidence" value="ECO:0007669"/>
    <property type="project" value="InterPro"/>
</dbReference>
<dbReference type="GO" id="GO:0055129">
    <property type="term" value="P:L-proline biosynthetic process"/>
    <property type="evidence" value="ECO:0007669"/>
    <property type="project" value="UniProtKB-UniRule"/>
</dbReference>
<dbReference type="CDD" id="cd07079">
    <property type="entry name" value="ALDH_F18-19_ProA-GPR"/>
    <property type="match status" value="1"/>
</dbReference>
<dbReference type="Gene3D" id="3.40.605.10">
    <property type="entry name" value="Aldehyde Dehydrogenase, Chain A, domain 1"/>
    <property type="match status" value="1"/>
</dbReference>
<dbReference type="Gene3D" id="3.40.309.10">
    <property type="entry name" value="Aldehyde Dehydrogenase, Chain A, domain 2"/>
    <property type="match status" value="1"/>
</dbReference>
<dbReference type="HAMAP" id="MF_00412">
    <property type="entry name" value="ProA"/>
    <property type="match status" value="1"/>
</dbReference>
<dbReference type="InterPro" id="IPR016161">
    <property type="entry name" value="Ald_DH/histidinol_DH"/>
</dbReference>
<dbReference type="InterPro" id="IPR016163">
    <property type="entry name" value="Ald_DH_C"/>
</dbReference>
<dbReference type="InterPro" id="IPR016162">
    <property type="entry name" value="Ald_DH_N"/>
</dbReference>
<dbReference type="InterPro" id="IPR020593">
    <property type="entry name" value="G-glutamylP_reductase_CS"/>
</dbReference>
<dbReference type="InterPro" id="IPR012134">
    <property type="entry name" value="Glu-5-SA_DH"/>
</dbReference>
<dbReference type="InterPro" id="IPR000965">
    <property type="entry name" value="GPR_dom"/>
</dbReference>
<dbReference type="NCBIfam" id="NF001221">
    <property type="entry name" value="PRK00197.1"/>
    <property type="match status" value="1"/>
</dbReference>
<dbReference type="NCBIfam" id="TIGR00407">
    <property type="entry name" value="proA"/>
    <property type="match status" value="1"/>
</dbReference>
<dbReference type="PANTHER" id="PTHR11063:SF8">
    <property type="entry name" value="DELTA-1-PYRROLINE-5-CARBOXYLATE SYNTHASE"/>
    <property type="match status" value="1"/>
</dbReference>
<dbReference type="PANTHER" id="PTHR11063">
    <property type="entry name" value="GLUTAMATE SEMIALDEHYDE DEHYDROGENASE"/>
    <property type="match status" value="1"/>
</dbReference>
<dbReference type="PIRSF" id="PIRSF000151">
    <property type="entry name" value="GPR"/>
    <property type="match status" value="1"/>
</dbReference>
<dbReference type="SUPFAM" id="SSF53720">
    <property type="entry name" value="ALDH-like"/>
    <property type="match status" value="1"/>
</dbReference>
<dbReference type="PROSITE" id="PS01223">
    <property type="entry name" value="PROA"/>
    <property type="match status" value="1"/>
</dbReference>
<comment type="function">
    <text evidence="1">Catalyzes the NADPH-dependent reduction of L-glutamate 5-phosphate into L-glutamate 5-semialdehyde and phosphate. The product spontaneously undergoes cyclization to form 1-pyrroline-5-carboxylate.</text>
</comment>
<comment type="catalytic activity">
    <reaction evidence="1">
        <text>L-glutamate 5-semialdehyde + phosphate + NADP(+) = L-glutamyl 5-phosphate + NADPH + H(+)</text>
        <dbReference type="Rhea" id="RHEA:19541"/>
        <dbReference type="ChEBI" id="CHEBI:15378"/>
        <dbReference type="ChEBI" id="CHEBI:43474"/>
        <dbReference type="ChEBI" id="CHEBI:57783"/>
        <dbReference type="ChEBI" id="CHEBI:58066"/>
        <dbReference type="ChEBI" id="CHEBI:58274"/>
        <dbReference type="ChEBI" id="CHEBI:58349"/>
        <dbReference type="EC" id="1.2.1.41"/>
    </reaction>
</comment>
<comment type="pathway">
    <text evidence="1">Amino-acid biosynthesis; L-proline biosynthesis; L-glutamate 5-semialdehyde from L-glutamate: step 2/2.</text>
</comment>
<comment type="subcellular location">
    <subcellularLocation>
        <location evidence="1">Cytoplasm</location>
    </subcellularLocation>
</comment>
<comment type="similarity">
    <text evidence="1">Belongs to the gamma-glutamyl phosphate reductase family.</text>
</comment>
<protein>
    <recommendedName>
        <fullName evidence="1">Gamma-glutamyl phosphate reductase</fullName>
        <shortName evidence="1">GPR</shortName>
        <ecNumber evidence="1">1.2.1.41</ecNumber>
    </recommendedName>
    <alternativeName>
        <fullName evidence="1">Glutamate-5-semialdehyde dehydrogenase</fullName>
    </alternativeName>
    <alternativeName>
        <fullName evidence="1">Glutamyl-gamma-semialdehyde dehydrogenase</fullName>
        <shortName evidence="1">GSA dehydrogenase</shortName>
    </alternativeName>
</protein>
<accession>Q5ZV33</accession>
<gene>
    <name evidence="1" type="primary">proA</name>
    <name type="ordered locus">lpg1609</name>
</gene>
<evidence type="ECO:0000255" key="1">
    <source>
        <dbReference type="HAMAP-Rule" id="MF_00412"/>
    </source>
</evidence>
<feature type="chain" id="PRO_0000189739" description="Gamma-glutamyl phosphate reductase">
    <location>
        <begin position="1"/>
        <end position="417"/>
    </location>
</feature>
<keyword id="KW-0028">Amino-acid biosynthesis</keyword>
<keyword id="KW-0963">Cytoplasm</keyword>
<keyword id="KW-0521">NADP</keyword>
<keyword id="KW-0560">Oxidoreductase</keyword>
<keyword id="KW-0641">Proline biosynthesis</keyword>
<keyword id="KW-1185">Reference proteome</keyword>
<organism>
    <name type="scientific">Legionella pneumophila subsp. pneumophila (strain Philadelphia 1 / ATCC 33152 / DSM 7513)</name>
    <dbReference type="NCBI Taxonomy" id="272624"/>
    <lineage>
        <taxon>Bacteria</taxon>
        <taxon>Pseudomonadati</taxon>
        <taxon>Pseudomonadota</taxon>
        <taxon>Gammaproteobacteria</taxon>
        <taxon>Legionellales</taxon>
        <taxon>Legionellaceae</taxon>
        <taxon>Legionella</taxon>
    </lineage>
</organism>
<name>PROA_LEGPH</name>
<proteinExistence type="inferred from homology"/>